<proteinExistence type="inferred from homology"/>
<feature type="chain" id="PRO_0000369364" description="Molybdenum cofactor sulfurase 1">
    <location>
        <begin position="1"/>
        <end position="764"/>
    </location>
</feature>
<feature type="domain" description="MOSC" evidence="1">
    <location>
        <begin position="607"/>
        <end position="762"/>
    </location>
</feature>
<feature type="active site" evidence="1">
    <location>
        <position position="394"/>
    </location>
</feature>
<feature type="modified residue" description="N6-(pyridoxal phosphate)lysine" evidence="1">
    <location>
        <position position="228"/>
    </location>
</feature>
<gene>
    <name evidence="1" type="primary">mal1</name>
    <name type="ORF">AAEL014381</name>
</gene>
<reference key="1">
    <citation type="journal article" date="2007" name="Science">
        <title>Genome sequence of Aedes aegypti, a major arbovirus vector.</title>
        <authorList>
            <person name="Nene V."/>
            <person name="Wortman J.R."/>
            <person name="Lawson D."/>
            <person name="Haas B.J."/>
            <person name="Kodira C.D."/>
            <person name="Tu Z.J."/>
            <person name="Loftus B.J."/>
            <person name="Xi Z."/>
            <person name="Megy K."/>
            <person name="Grabherr M."/>
            <person name="Ren Q."/>
            <person name="Zdobnov E.M."/>
            <person name="Lobo N.F."/>
            <person name="Campbell K.S."/>
            <person name="Brown S.E."/>
            <person name="Bonaldo M.F."/>
            <person name="Zhu J."/>
            <person name="Sinkins S.P."/>
            <person name="Hogenkamp D.G."/>
            <person name="Amedeo P."/>
            <person name="Arensburger P."/>
            <person name="Atkinson P.W."/>
            <person name="Bidwell S.L."/>
            <person name="Biedler J."/>
            <person name="Birney E."/>
            <person name="Bruggner R.V."/>
            <person name="Costas J."/>
            <person name="Coy M.R."/>
            <person name="Crabtree J."/>
            <person name="Crawford M."/>
            <person name="DeBruyn B."/>
            <person name="DeCaprio D."/>
            <person name="Eiglmeier K."/>
            <person name="Eisenstadt E."/>
            <person name="El-Dorry H."/>
            <person name="Gelbart W.M."/>
            <person name="Gomes S.L."/>
            <person name="Hammond M."/>
            <person name="Hannick L.I."/>
            <person name="Hogan J.R."/>
            <person name="Holmes M.H."/>
            <person name="Jaffe D."/>
            <person name="Johnston S.J."/>
            <person name="Kennedy R.C."/>
            <person name="Koo H."/>
            <person name="Kravitz S."/>
            <person name="Kriventseva E.V."/>
            <person name="Kulp D."/>
            <person name="Labutti K."/>
            <person name="Lee E."/>
            <person name="Li S."/>
            <person name="Lovin D.D."/>
            <person name="Mao C."/>
            <person name="Mauceli E."/>
            <person name="Menck C.F."/>
            <person name="Miller J.R."/>
            <person name="Montgomery P."/>
            <person name="Mori A."/>
            <person name="Nascimento A.L."/>
            <person name="Naveira H.F."/>
            <person name="Nusbaum C."/>
            <person name="O'Leary S.B."/>
            <person name="Orvis J."/>
            <person name="Pertea M."/>
            <person name="Quesneville H."/>
            <person name="Reidenbach K.R."/>
            <person name="Rogers Y.-H.C."/>
            <person name="Roth C.W."/>
            <person name="Schneider J.R."/>
            <person name="Schatz M."/>
            <person name="Shumway M."/>
            <person name="Stanke M."/>
            <person name="Stinson E.O."/>
            <person name="Tubio J.M.C."/>
            <person name="Vanzee J.P."/>
            <person name="Verjovski-Almeida S."/>
            <person name="Werner D."/>
            <person name="White O.R."/>
            <person name="Wyder S."/>
            <person name="Zeng Q."/>
            <person name="Zhao Q."/>
            <person name="Zhao Y."/>
            <person name="Hill C.A."/>
            <person name="Raikhel A.S."/>
            <person name="Soares M.B."/>
            <person name="Knudson D.L."/>
            <person name="Lee N.H."/>
            <person name="Galagan J."/>
            <person name="Salzberg S.L."/>
            <person name="Paulsen I.T."/>
            <person name="Dimopoulos G."/>
            <person name="Collins F.H."/>
            <person name="Bruce B."/>
            <person name="Fraser-Liggett C.M."/>
            <person name="Severson D.W."/>
        </authorList>
    </citation>
    <scope>NUCLEOTIDE SEQUENCE [LARGE SCALE GENOMIC DNA]</scope>
    <source>
        <strain>LVPib12</strain>
    </source>
</reference>
<sequence length="764" mass="86630">MEAMMNFTSQYTVEEALAIENEFSRLKEKCYLDHAGTTLYADSQIRSVCEGLAQNLYCNPHTSRTTEDLLDQVRYRVLRHFNTRSSEYSLIFTSGTTASLKLLAESFEFAPEGAFVYLKDSHTSVLGMREIVGTERIYPVEREQLLKELDSSERSDNEHSSLIVFPAQCNFNGVKYPLELVRKIQRDGISGYGKERFRVCLDAASFVSTSFLDLSKYQPDFVCLSFYKIFGYPTGLGALLVHHTAADQLRKKYYGGGTVKIAMAGRIFHVKRDPLVERFEDGTLAFTSIIALLQGFETLERLVPSTAGLRTIERISQQTFHIGRYCYNRLKALRHSNENAVVKLYHDTGFEDRGLQGGIVNFNILHEDGTYVGFAEVSYMASLHNILLRTGCFCNPGACQRHLQLSDEDVLKQFDAGHVCGDANDLIDGQPTGSVRVSFGYMTRKEDIDCLLEMIEKCYIRKTIANGFTRTQIVSKYKSHDQPRLKMICLFPIKSCGAFKVTTRWPLSRRGLKHDREFVIVDENGVALTQKKLAEMCLIRPQINVKTNEMTLSHPGMADFVLQLDLLGESQRIKLCQTKVCQDNVQAIDCGDQVAEWISVALQTSGLRLLKQSDEEVRTFQQSKQEIALANQAQFLLINQASVRWLADKVPDWDELHEEPTLESLVDRFRGNLIVETPKSMEECDWKRVTIGYLEFAVDGPCSRCQMICIDQGTGVKATEPLRTIGREFKGKMRFGIYLSHVNPLRDGSEQWLYCNSVVEGLSE</sequence>
<accession>Q16GH0</accession>
<keyword id="KW-0501">Molybdenum cofactor biosynthesis</keyword>
<keyword id="KW-0663">Pyridoxal phosphate</keyword>
<keyword id="KW-1185">Reference proteome</keyword>
<keyword id="KW-0808">Transferase</keyword>
<name>MOCO1_AEDAE</name>
<protein>
    <recommendedName>
        <fullName evidence="1">Molybdenum cofactor sulfurase 1</fullName>
        <shortName evidence="1">MCS 1</shortName>
        <shortName evidence="1">MOS 1</shortName>
        <shortName evidence="1">MoCo sulfurase 1</shortName>
        <ecNumber evidence="1">2.8.1.9</ecNumber>
    </recommendedName>
    <alternativeName>
        <fullName evidence="1">Molybdenum cofactor sulfurtransferase 1</fullName>
    </alternativeName>
    <alternativeName>
        <fullName evidence="1">Protein maroon-like 1</fullName>
        <shortName evidence="1">Ma-l 1</shortName>
    </alternativeName>
</protein>
<dbReference type="EC" id="2.8.1.9" evidence="1"/>
<dbReference type="EMBL" id="CH478278">
    <property type="protein sequence ID" value="EAT33329.1"/>
    <property type="molecule type" value="Genomic_DNA"/>
</dbReference>
<dbReference type="RefSeq" id="XP_001648634.1">
    <property type="nucleotide sequence ID" value="XM_001648584.1"/>
</dbReference>
<dbReference type="SMR" id="Q16GH0"/>
<dbReference type="FunCoup" id="Q16GH0">
    <property type="interactions" value="148"/>
</dbReference>
<dbReference type="STRING" id="7159.Q16GH0"/>
<dbReference type="PaxDb" id="7159-AAEL014381-PA"/>
<dbReference type="VEuPathDB" id="VectorBase:AAEL022615"/>
<dbReference type="eggNOG" id="KOG2142">
    <property type="taxonomic scope" value="Eukaryota"/>
</dbReference>
<dbReference type="HOGENOM" id="CLU_010913_0_1_1"/>
<dbReference type="InParanoid" id="Q16GH0"/>
<dbReference type="OMA" id="HTGFLAR"/>
<dbReference type="PhylomeDB" id="Q16GH0"/>
<dbReference type="Proteomes" id="UP000008820">
    <property type="component" value="Unassembled WGS sequence"/>
</dbReference>
<dbReference type="Proteomes" id="UP000682892">
    <property type="component" value="Unassembled WGS sequence"/>
</dbReference>
<dbReference type="GO" id="GO:0016829">
    <property type="term" value="F:lyase activity"/>
    <property type="evidence" value="ECO:0007669"/>
    <property type="project" value="UniProtKB-UniRule"/>
</dbReference>
<dbReference type="GO" id="GO:0008265">
    <property type="term" value="F:molybdenum cofactor sulfurtransferase activity"/>
    <property type="evidence" value="ECO:0000250"/>
    <property type="project" value="UniProtKB"/>
</dbReference>
<dbReference type="GO" id="GO:0030151">
    <property type="term" value="F:molybdenum ion binding"/>
    <property type="evidence" value="ECO:0007669"/>
    <property type="project" value="UniProtKB-UniRule"/>
</dbReference>
<dbReference type="GO" id="GO:0030170">
    <property type="term" value="F:pyridoxal phosphate binding"/>
    <property type="evidence" value="ECO:0007669"/>
    <property type="project" value="UniProtKB-UniRule"/>
</dbReference>
<dbReference type="GO" id="GO:0006777">
    <property type="term" value="P:Mo-molybdopterin cofactor biosynthetic process"/>
    <property type="evidence" value="ECO:0007669"/>
    <property type="project" value="UniProtKB-UniRule"/>
</dbReference>
<dbReference type="GO" id="GO:0043545">
    <property type="term" value="P:molybdopterin cofactor metabolic process"/>
    <property type="evidence" value="ECO:0000250"/>
    <property type="project" value="UniProtKB"/>
</dbReference>
<dbReference type="FunFam" id="3.40.640.10:FF:000119">
    <property type="entry name" value="Molybdenum cofactor sulfurase"/>
    <property type="match status" value="1"/>
</dbReference>
<dbReference type="FunFam" id="3.90.1150.10:FF:000079">
    <property type="entry name" value="Molybdenum cofactor sulfurase"/>
    <property type="match status" value="1"/>
</dbReference>
<dbReference type="Gene3D" id="3.90.1150.10">
    <property type="entry name" value="Aspartate Aminotransferase, domain 1"/>
    <property type="match status" value="1"/>
</dbReference>
<dbReference type="Gene3D" id="3.40.640.10">
    <property type="entry name" value="Type I PLP-dependent aspartate aminotransferase-like (Major domain)"/>
    <property type="match status" value="1"/>
</dbReference>
<dbReference type="HAMAP" id="MF_03050">
    <property type="entry name" value="MOCOS"/>
    <property type="match status" value="1"/>
</dbReference>
<dbReference type="InterPro" id="IPR000192">
    <property type="entry name" value="Aminotrans_V_dom"/>
</dbReference>
<dbReference type="InterPro" id="IPR005302">
    <property type="entry name" value="MoCF_Sase_C"/>
</dbReference>
<dbReference type="InterPro" id="IPR028886">
    <property type="entry name" value="MoCo_sulfurase"/>
</dbReference>
<dbReference type="InterPro" id="IPR005303">
    <property type="entry name" value="MOCOS_middle"/>
</dbReference>
<dbReference type="InterPro" id="IPR015424">
    <property type="entry name" value="PyrdxlP-dep_Trfase"/>
</dbReference>
<dbReference type="InterPro" id="IPR015421">
    <property type="entry name" value="PyrdxlP-dep_Trfase_major"/>
</dbReference>
<dbReference type="InterPro" id="IPR015422">
    <property type="entry name" value="PyrdxlP-dep_Trfase_small"/>
</dbReference>
<dbReference type="InterPro" id="IPR011037">
    <property type="entry name" value="Pyrv_Knase-like_insert_dom_sf"/>
</dbReference>
<dbReference type="PANTHER" id="PTHR14237:SF19">
    <property type="entry name" value="MITOCHONDRIAL AMIDOXIME REDUCING COMPONENT 1"/>
    <property type="match status" value="1"/>
</dbReference>
<dbReference type="PANTHER" id="PTHR14237">
    <property type="entry name" value="MOLYBDOPTERIN COFACTOR SULFURASE MOSC"/>
    <property type="match status" value="1"/>
</dbReference>
<dbReference type="Pfam" id="PF00266">
    <property type="entry name" value="Aminotran_5"/>
    <property type="match status" value="1"/>
</dbReference>
<dbReference type="Pfam" id="PF03473">
    <property type="entry name" value="MOSC"/>
    <property type="match status" value="1"/>
</dbReference>
<dbReference type="Pfam" id="PF03476">
    <property type="entry name" value="MOSC_N"/>
    <property type="match status" value="1"/>
</dbReference>
<dbReference type="SUPFAM" id="SSF141673">
    <property type="entry name" value="MOSC N-terminal domain-like"/>
    <property type="match status" value="1"/>
</dbReference>
<dbReference type="SUPFAM" id="SSF50800">
    <property type="entry name" value="PK beta-barrel domain-like"/>
    <property type="match status" value="1"/>
</dbReference>
<dbReference type="SUPFAM" id="SSF53383">
    <property type="entry name" value="PLP-dependent transferases"/>
    <property type="match status" value="1"/>
</dbReference>
<dbReference type="PROSITE" id="PS51340">
    <property type="entry name" value="MOSC"/>
    <property type="match status" value="1"/>
</dbReference>
<evidence type="ECO:0000255" key="1">
    <source>
        <dbReference type="HAMAP-Rule" id="MF_03050"/>
    </source>
</evidence>
<comment type="function">
    <text evidence="1">Sulfurates the molybdenum cofactor. Sulfation of molybdenum is essential for xanthine dehydrogenase (XDH) and aldehyde oxidase (ADO) enzymes in which molybdenum cofactor is liganded by 1 oxygen and 1 sulfur atom in active form.</text>
</comment>
<comment type="catalytic activity">
    <reaction evidence="1">
        <text>Mo-molybdopterin + L-cysteine + AH2 = thio-Mo-molybdopterin + L-alanine + A + H2O</text>
        <dbReference type="Rhea" id="RHEA:42636"/>
        <dbReference type="ChEBI" id="CHEBI:13193"/>
        <dbReference type="ChEBI" id="CHEBI:15377"/>
        <dbReference type="ChEBI" id="CHEBI:17499"/>
        <dbReference type="ChEBI" id="CHEBI:35235"/>
        <dbReference type="ChEBI" id="CHEBI:57972"/>
        <dbReference type="ChEBI" id="CHEBI:71302"/>
        <dbReference type="ChEBI" id="CHEBI:82685"/>
        <dbReference type="EC" id="2.8.1.9"/>
    </reaction>
</comment>
<comment type="cofactor">
    <cofactor evidence="1">
        <name>pyridoxal 5'-phosphate</name>
        <dbReference type="ChEBI" id="CHEBI:597326"/>
    </cofactor>
</comment>
<comment type="similarity">
    <text evidence="1">Belongs to the class-V pyridoxal-phosphate-dependent aminotransferase family. MOCOS subfamily.</text>
</comment>
<organism>
    <name type="scientific">Aedes aegypti</name>
    <name type="common">Yellowfever mosquito</name>
    <name type="synonym">Culex aegypti</name>
    <dbReference type="NCBI Taxonomy" id="7159"/>
    <lineage>
        <taxon>Eukaryota</taxon>
        <taxon>Metazoa</taxon>
        <taxon>Ecdysozoa</taxon>
        <taxon>Arthropoda</taxon>
        <taxon>Hexapoda</taxon>
        <taxon>Insecta</taxon>
        <taxon>Pterygota</taxon>
        <taxon>Neoptera</taxon>
        <taxon>Endopterygota</taxon>
        <taxon>Diptera</taxon>
        <taxon>Nematocera</taxon>
        <taxon>Culicoidea</taxon>
        <taxon>Culicidae</taxon>
        <taxon>Culicinae</taxon>
        <taxon>Aedini</taxon>
        <taxon>Aedes</taxon>
        <taxon>Stegomyia</taxon>
    </lineage>
</organism>